<comment type="function">
    <text evidence="1">Molecular chaperone that may interact with a ClpP-like protease involved in degradation of denatured proteins in the chloroplast.</text>
</comment>
<comment type="subcellular location">
    <subcellularLocation>
        <location evidence="6">Plastid</location>
        <location evidence="6">Chloroplast</location>
    </subcellularLocation>
</comment>
<comment type="similarity">
    <text evidence="6">Belongs to the ClpA/ClpB family. ClpC subfamily.</text>
</comment>
<name>CLPC3_ORYSJ</name>
<dbReference type="EMBL" id="AC138005">
    <property type="protein sequence ID" value="AAX96285.1"/>
    <property type="molecule type" value="Genomic_DNA"/>
</dbReference>
<dbReference type="EMBL" id="DP000010">
    <property type="protein sequence ID" value="ABA92591.1"/>
    <property type="molecule type" value="Genomic_DNA"/>
</dbReference>
<dbReference type="EMBL" id="AP008217">
    <property type="protein sequence ID" value="BAF28034.1"/>
    <property type="molecule type" value="Genomic_DNA"/>
</dbReference>
<dbReference type="EMBL" id="AP014967">
    <property type="protein sequence ID" value="BAT13547.1"/>
    <property type="molecule type" value="Genomic_DNA"/>
</dbReference>
<dbReference type="EMBL" id="AK100126">
    <property type="status" value="NOT_ANNOTATED_CDS"/>
    <property type="molecule type" value="mRNA"/>
</dbReference>
<dbReference type="RefSeq" id="XP_015617923.1">
    <property type="nucleotide sequence ID" value="XM_015762437.1"/>
</dbReference>
<dbReference type="SMR" id="Q53LY0"/>
<dbReference type="STRING" id="39947.Q53LY0"/>
<dbReference type="PaxDb" id="39947-Q53LY0"/>
<dbReference type="EnsemblPlants" id="Os11t0267400-01">
    <property type="protein sequence ID" value="Os11t0267400-01"/>
    <property type="gene ID" value="Os11g0267400"/>
</dbReference>
<dbReference type="Gramene" id="Os11t0267400-01">
    <property type="protein sequence ID" value="Os11t0267400-01"/>
    <property type="gene ID" value="Os11g0267400"/>
</dbReference>
<dbReference type="KEGG" id="dosa:Os11g0267400"/>
<dbReference type="eggNOG" id="KOG1051">
    <property type="taxonomic scope" value="Eukaryota"/>
</dbReference>
<dbReference type="HOGENOM" id="CLU_005070_4_1_1"/>
<dbReference type="InParanoid" id="Q53LY0"/>
<dbReference type="OMA" id="NYINTEH"/>
<dbReference type="OrthoDB" id="47330at2759"/>
<dbReference type="Proteomes" id="UP000000763">
    <property type="component" value="Chromosome 11"/>
</dbReference>
<dbReference type="Proteomes" id="UP000059680">
    <property type="component" value="Chromosome 11"/>
</dbReference>
<dbReference type="GO" id="GO:0009507">
    <property type="term" value="C:chloroplast"/>
    <property type="evidence" value="ECO:0007669"/>
    <property type="project" value="UniProtKB-SubCell"/>
</dbReference>
<dbReference type="GO" id="GO:0005524">
    <property type="term" value="F:ATP binding"/>
    <property type="evidence" value="ECO:0007669"/>
    <property type="project" value="UniProtKB-KW"/>
</dbReference>
<dbReference type="GO" id="GO:0016887">
    <property type="term" value="F:ATP hydrolysis activity"/>
    <property type="evidence" value="ECO:0007669"/>
    <property type="project" value="InterPro"/>
</dbReference>
<dbReference type="CDD" id="cd00009">
    <property type="entry name" value="AAA"/>
    <property type="match status" value="1"/>
</dbReference>
<dbReference type="CDD" id="cd19499">
    <property type="entry name" value="RecA-like_ClpB_Hsp104-like"/>
    <property type="match status" value="1"/>
</dbReference>
<dbReference type="FunFam" id="3.40.50.300:FF:000025">
    <property type="entry name" value="ATP-dependent Clp protease subunit"/>
    <property type="match status" value="1"/>
</dbReference>
<dbReference type="FunFam" id="3.40.50.300:FF:000010">
    <property type="entry name" value="Chaperone clpB 1, putative"/>
    <property type="match status" value="1"/>
</dbReference>
<dbReference type="Gene3D" id="1.10.8.60">
    <property type="match status" value="2"/>
</dbReference>
<dbReference type="Gene3D" id="1.10.1780.10">
    <property type="entry name" value="Clp, N-terminal domain"/>
    <property type="match status" value="1"/>
</dbReference>
<dbReference type="Gene3D" id="3.40.50.300">
    <property type="entry name" value="P-loop containing nucleotide triphosphate hydrolases"/>
    <property type="match status" value="2"/>
</dbReference>
<dbReference type="Gene3D" id="4.10.860.10">
    <property type="entry name" value="UVR domain"/>
    <property type="match status" value="1"/>
</dbReference>
<dbReference type="InterPro" id="IPR003593">
    <property type="entry name" value="AAA+_ATPase"/>
</dbReference>
<dbReference type="InterPro" id="IPR003959">
    <property type="entry name" value="ATPase_AAA_core"/>
</dbReference>
<dbReference type="InterPro" id="IPR019489">
    <property type="entry name" value="Clp_ATPase_C"/>
</dbReference>
<dbReference type="InterPro" id="IPR036628">
    <property type="entry name" value="Clp_N_dom_sf"/>
</dbReference>
<dbReference type="InterPro" id="IPR004176">
    <property type="entry name" value="Clp_R_dom"/>
</dbReference>
<dbReference type="InterPro" id="IPR001270">
    <property type="entry name" value="ClpA/B"/>
</dbReference>
<dbReference type="InterPro" id="IPR018368">
    <property type="entry name" value="ClpA/B_CS1"/>
</dbReference>
<dbReference type="InterPro" id="IPR028299">
    <property type="entry name" value="ClpA/B_CS2"/>
</dbReference>
<dbReference type="InterPro" id="IPR041546">
    <property type="entry name" value="ClpA/ClpB_AAA_lid"/>
</dbReference>
<dbReference type="InterPro" id="IPR050130">
    <property type="entry name" value="ClpA_ClpB"/>
</dbReference>
<dbReference type="InterPro" id="IPR027417">
    <property type="entry name" value="P-loop_NTPase"/>
</dbReference>
<dbReference type="InterPro" id="IPR001943">
    <property type="entry name" value="UVR_dom"/>
</dbReference>
<dbReference type="PANTHER" id="PTHR11638">
    <property type="entry name" value="ATP-DEPENDENT CLP PROTEASE"/>
    <property type="match status" value="1"/>
</dbReference>
<dbReference type="PANTHER" id="PTHR11638:SF155">
    <property type="entry name" value="CHAPERONE PROTEIN CLPC1, CHLOROPLASTIC-LIKE"/>
    <property type="match status" value="1"/>
</dbReference>
<dbReference type="Pfam" id="PF00004">
    <property type="entry name" value="AAA"/>
    <property type="match status" value="1"/>
</dbReference>
<dbReference type="Pfam" id="PF07724">
    <property type="entry name" value="AAA_2"/>
    <property type="match status" value="1"/>
</dbReference>
<dbReference type="Pfam" id="PF17871">
    <property type="entry name" value="AAA_lid_9"/>
    <property type="match status" value="1"/>
</dbReference>
<dbReference type="Pfam" id="PF02861">
    <property type="entry name" value="Clp_N"/>
    <property type="match status" value="2"/>
</dbReference>
<dbReference type="Pfam" id="PF10431">
    <property type="entry name" value="ClpB_D2-small"/>
    <property type="match status" value="1"/>
</dbReference>
<dbReference type="PRINTS" id="PR00300">
    <property type="entry name" value="CLPPROTEASEA"/>
</dbReference>
<dbReference type="SMART" id="SM00382">
    <property type="entry name" value="AAA"/>
    <property type="match status" value="2"/>
</dbReference>
<dbReference type="SMART" id="SM01086">
    <property type="entry name" value="ClpB_D2-small"/>
    <property type="match status" value="1"/>
</dbReference>
<dbReference type="SUPFAM" id="SSF81923">
    <property type="entry name" value="Double Clp-N motif"/>
    <property type="match status" value="1"/>
</dbReference>
<dbReference type="SUPFAM" id="SSF52540">
    <property type="entry name" value="P-loop containing nucleoside triphosphate hydrolases"/>
    <property type="match status" value="2"/>
</dbReference>
<dbReference type="PROSITE" id="PS51903">
    <property type="entry name" value="CLP_R"/>
    <property type="match status" value="1"/>
</dbReference>
<dbReference type="PROSITE" id="PS00870">
    <property type="entry name" value="CLPAB_1"/>
    <property type="match status" value="1"/>
</dbReference>
<dbReference type="PROSITE" id="PS00871">
    <property type="entry name" value="CLPAB_2"/>
    <property type="match status" value="1"/>
</dbReference>
<dbReference type="PROSITE" id="PS50151">
    <property type="entry name" value="UVR"/>
    <property type="match status" value="1"/>
</dbReference>
<protein>
    <recommendedName>
        <fullName>Chaperone protein ClpC3, chloroplastic</fullName>
    </recommendedName>
    <alternativeName>
        <fullName>ATP-dependent Clp protease ATP-binding subunit ClpC homolog 3</fullName>
    </alternativeName>
    <alternativeName>
        <fullName>Casein lytic proteinase C3</fullName>
    </alternativeName>
</protein>
<reference key="1">
    <citation type="journal article" date="2005" name="BMC Biol.">
        <title>The sequence of rice chromosomes 11 and 12, rich in disease resistance genes and recent gene duplications.</title>
        <authorList>
            <consortium name="The rice chromosomes 11 and 12 sequencing consortia"/>
        </authorList>
    </citation>
    <scope>NUCLEOTIDE SEQUENCE [LARGE SCALE GENOMIC DNA]</scope>
    <source>
        <strain>cv. Nipponbare</strain>
    </source>
</reference>
<reference key="2">
    <citation type="journal article" date="2005" name="Nature">
        <title>The map-based sequence of the rice genome.</title>
        <authorList>
            <consortium name="International rice genome sequencing project (IRGSP)"/>
        </authorList>
    </citation>
    <scope>NUCLEOTIDE SEQUENCE [LARGE SCALE GENOMIC DNA]</scope>
    <source>
        <strain>cv. Nipponbare</strain>
    </source>
</reference>
<reference key="3">
    <citation type="journal article" date="2008" name="Nucleic Acids Res.">
        <title>The rice annotation project database (RAP-DB): 2008 update.</title>
        <authorList>
            <consortium name="The rice annotation project (RAP)"/>
        </authorList>
    </citation>
    <scope>GENOME REANNOTATION</scope>
    <source>
        <strain>cv. Nipponbare</strain>
    </source>
</reference>
<reference key="4">
    <citation type="journal article" date="2013" name="Rice">
        <title>Improvement of the Oryza sativa Nipponbare reference genome using next generation sequence and optical map data.</title>
        <authorList>
            <person name="Kawahara Y."/>
            <person name="de la Bastide M."/>
            <person name="Hamilton J.P."/>
            <person name="Kanamori H."/>
            <person name="McCombie W.R."/>
            <person name="Ouyang S."/>
            <person name="Schwartz D.C."/>
            <person name="Tanaka T."/>
            <person name="Wu J."/>
            <person name="Zhou S."/>
            <person name="Childs K.L."/>
            <person name="Davidson R.M."/>
            <person name="Lin H."/>
            <person name="Quesada-Ocampo L."/>
            <person name="Vaillancourt B."/>
            <person name="Sakai H."/>
            <person name="Lee S.S."/>
            <person name="Kim J."/>
            <person name="Numa H."/>
            <person name="Itoh T."/>
            <person name="Buell C.R."/>
            <person name="Matsumoto T."/>
        </authorList>
    </citation>
    <scope>GENOME REANNOTATION</scope>
    <source>
        <strain>cv. Nipponbare</strain>
    </source>
</reference>
<reference key="5">
    <citation type="journal article" date="2003" name="Science">
        <title>Collection, mapping, and annotation of over 28,000 cDNA clones from japonica rice.</title>
        <authorList>
            <consortium name="The rice full-length cDNA consortium"/>
        </authorList>
    </citation>
    <scope>NUCLEOTIDE SEQUENCE [LARGE SCALE MRNA]</scope>
    <source>
        <strain>cv. Nipponbare</strain>
    </source>
</reference>
<organism>
    <name type="scientific">Oryza sativa subsp. japonica</name>
    <name type="common">Rice</name>
    <dbReference type="NCBI Taxonomy" id="39947"/>
    <lineage>
        <taxon>Eukaryota</taxon>
        <taxon>Viridiplantae</taxon>
        <taxon>Streptophyta</taxon>
        <taxon>Embryophyta</taxon>
        <taxon>Tracheophyta</taxon>
        <taxon>Spermatophyta</taxon>
        <taxon>Magnoliopsida</taxon>
        <taxon>Liliopsida</taxon>
        <taxon>Poales</taxon>
        <taxon>Poaceae</taxon>
        <taxon>BOP clade</taxon>
        <taxon>Oryzoideae</taxon>
        <taxon>Oryzeae</taxon>
        <taxon>Oryzinae</taxon>
        <taxon>Oryza</taxon>
        <taxon>Oryza sativa</taxon>
    </lineage>
</organism>
<gene>
    <name type="primary">CLPC3</name>
    <name type="ordered locus">Os11g0267400</name>
    <name type="ordered locus">LOC_Os11g16590</name>
</gene>
<proteinExistence type="evidence at transcript level"/>
<feature type="transit peptide" description="Chloroplast" evidence="2">
    <location>
        <begin position="1"/>
        <end position="48"/>
    </location>
</feature>
<feature type="chain" id="PRO_0000412581" description="Chaperone protein ClpC3, chloroplastic">
    <location>
        <begin position="49"/>
        <end position="932"/>
    </location>
</feature>
<feature type="domain" description="Clp R" evidence="4">
    <location>
        <begin position="99"/>
        <end position="240"/>
    </location>
</feature>
<feature type="domain" description="UVR" evidence="3">
    <location>
        <begin position="518"/>
        <end position="553"/>
    </location>
</feature>
<feature type="region of interest" description="Disordered" evidence="5">
    <location>
        <begin position="1"/>
        <end position="20"/>
    </location>
</feature>
<feature type="region of interest" description="Repeat 1" evidence="4">
    <location>
        <begin position="102"/>
        <end position="167"/>
    </location>
</feature>
<feature type="region of interest" description="Repeat 2" evidence="4">
    <location>
        <begin position="177"/>
        <end position="240"/>
    </location>
</feature>
<feature type="region of interest" description="I" evidence="1">
    <location>
        <begin position="264"/>
        <end position="511"/>
    </location>
</feature>
<feature type="region of interest" description="II" evidence="1">
    <location>
        <begin position="579"/>
        <end position="770"/>
    </location>
</feature>
<feature type="binding site" evidence="2">
    <location>
        <begin position="309"/>
        <end position="316"/>
    </location>
    <ligand>
        <name>ATP</name>
        <dbReference type="ChEBI" id="CHEBI:30616"/>
    </ligand>
</feature>
<feature type="binding site" evidence="2">
    <location>
        <begin position="653"/>
        <end position="660"/>
    </location>
    <ligand>
        <name>ATP</name>
        <dbReference type="ChEBI" id="CHEBI:30616"/>
    </ligand>
</feature>
<feature type="sequence conflict" description="In Ref. 5; AK100126." evidence="6" ref="5">
    <original>E</original>
    <variation>G</variation>
    <location>
        <position position="359"/>
    </location>
</feature>
<feature type="sequence conflict" description="In Ref. 5; AK100126." evidence="6" ref="5">
    <original>G</original>
    <variation>S</variation>
    <location>
        <position position="790"/>
    </location>
</feature>
<evidence type="ECO:0000250" key="1"/>
<evidence type="ECO:0000255" key="2"/>
<evidence type="ECO:0000255" key="3">
    <source>
        <dbReference type="PROSITE-ProRule" id="PRU00217"/>
    </source>
</evidence>
<evidence type="ECO:0000255" key="4">
    <source>
        <dbReference type="PROSITE-ProRule" id="PRU01251"/>
    </source>
</evidence>
<evidence type="ECO:0000256" key="5">
    <source>
        <dbReference type="SAM" id="MobiDB-lite"/>
    </source>
</evidence>
<evidence type="ECO:0000305" key="6"/>
<keyword id="KW-0067">ATP-binding</keyword>
<keyword id="KW-0143">Chaperone</keyword>
<keyword id="KW-0150">Chloroplast</keyword>
<keyword id="KW-0547">Nucleotide-binding</keyword>
<keyword id="KW-0934">Plastid</keyword>
<keyword id="KW-1185">Reference proteome</keyword>
<keyword id="KW-0677">Repeat</keyword>
<keyword id="KW-0809">Transit peptide</keyword>
<accession>Q53LY0</accession>
<accession>A0A0P0Y0W1</accession>
<sequence length="932" mass="100884">MERTLLNPPPSLRSPACRTTTATRIRPSSSMATMIPTPPPMRHARLVKASAAGRRELHAPPIAPPILLGLRSPAAASYGRASGGGGRRRGARVVARMGFDMFTDKAIKAIMMAQEEARRLGHHAAGSEQLLLGVIGEGTGIGAKVLRGAGLSLKAARAEVEKMAGRGPGMVPMEIKFTPAAKNVLQASQEEAHQLGHNYVGSEHLLLGLLREHGAALVVLKNFQADPSNIRSEVIRMISDTSEDHQPVSAAVGGGSSTTKIPTLLEYGTNLTKLAEEGKLDPVVGRQNQVDRVVQILGRRTKNNPCLIGEPGVGKTAIAEGLAQRIAAGNVPETIDGKTVITLDMGLLVAGTKYRGEFEERLKKLMDEVKQNGEIILFLDEVHTLVGAGAAEGAIDAANILKPALARGELQCIGATTIDEYRKHIEKDPALERRFQPVKVPEPTVDETIGILKGLRERYEIHHKVQYTDESLIAAARLSYQYISDRFLPDKAIDLVDEAGSLVRLRNAQLPDEAKELEKKLKKIMAEKSEAIRSQDFEKAGALRGEEVELKSEIMSLVDKSKEMSKAAVDSGESPGPTVTEADVQHIVSSWTGVPVEKVTVDESSRLLAMESSLHRRIVGQDEAVTAISRAIRRARVGLRDPRRPIASFIFAGPTGVGKSELAKALAAYYYGSPEAMVRLDMSEFMEKHTVAKLVGSPPGYVGYAEGGQLTEAIRRRPYAVVLFDEVEKAHPDVFNMMLQILDDGRLTDSKGRTVDFKNSLIIMTSNVGSGVIEKGGRQLGFAGDGSGDGGYGVIKNMVEEEMKRYFRPEFLNRLDEMIVFRQLTKLEVKEIAGIMLAEVTGRIGGKGIGLQVTERFKELVVEQGFDPSYGARPLRRAIMRLLEDTLTDKMLAGEICAGDSVIVDADGDGNVVVVGRRSAGLPDLKSPAFTV</sequence>